<keyword id="KW-0436">Ligase</keyword>
<keyword id="KW-0456">Lyase</keyword>
<organism>
    <name type="scientific">Haloferax mediterranei (strain ATCC 33500 / DSM 1411 / JCM 8866 / NBRC 14739 / NCIMB 2177 / R-4)</name>
    <name type="common">Halobacterium mediterranei</name>
    <dbReference type="NCBI Taxonomy" id="523841"/>
    <lineage>
        <taxon>Archaea</taxon>
        <taxon>Methanobacteriati</taxon>
        <taxon>Methanobacteriota</taxon>
        <taxon>Stenosarchaea group</taxon>
        <taxon>Halobacteria</taxon>
        <taxon>Halobacteriales</taxon>
        <taxon>Haloferacaceae</taxon>
        <taxon>Haloferax</taxon>
    </lineage>
</organism>
<feature type="chain" id="PRO_0000439636" description="Propionyl-CoA carboxylase, carboxyltransferase subunit">
    <location>
        <begin position="1"/>
        <end position="516"/>
    </location>
</feature>
<feature type="domain" description="CoA carboxyltransferase N-terminal" evidence="1">
    <location>
        <begin position="3"/>
        <end position="259"/>
    </location>
</feature>
<feature type="domain" description="CoA carboxyltransferase C-terminal" evidence="2">
    <location>
        <begin position="263"/>
        <end position="509"/>
    </location>
</feature>
<feature type="region of interest" description="Disordered" evidence="3">
    <location>
        <begin position="1"/>
        <end position="32"/>
    </location>
</feature>
<accession>I3R7F1</accession>
<comment type="function">
    <text evidence="4">Part of the propionyl coenzyme A carboxylase (PCC) complex involved in propionate utilization and in the production of the poly(3-hydroxybutyrate-co-3-hydroxyvalerate)(PHBV), which is a water-insoluble biopolymer used as intracellular energy reserve material when cells grow under conditions of nutrient limitation. The complex catalyzes the carboxylation of propionyl-CoA to methylmalonyl-CoA. PCC is also able to catalyze the carboxylation of acetyl-CoA.</text>
</comment>
<comment type="catalytic activity">
    <reaction evidence="4">
        <text>propanoyl-CoA + hydrogencarbonate + ATP = (S)-methylmalonyl-CoA + ADP + phosphate + H(+)</text>
        <dbReference type="Rhea" id="RHEA:23720"/>
        <dbReference type="ChEBI" id="CHEBI:15378"/>
        <dbReference type="ChEBI" id="CHEBI:17544"/>
        <dbReference type="ChEBI" id="CHEBI:30616"/>
        <dbReference type="ChEBI" id="CHEBI:43474"/>
        <dbReference type="ChEBI" id="CHEBI:57327"/>
        <dbReference type="ChEBI" id="CHEBI:57392"/>
        <dbReference type="ChEBI" id="CHEBI:456216"/>
        <dbReference type="EC" id="6.4.1.3"/>
    </reaction>
</comment>
<comment type="pathway">
    <text evidence="7">Metabolic intermediate metabolism; propanoyl-CoA degradation; succinyl-CoA from propanoyl-CoA: step 1/3.</text>
</comment>
<comment type="subunit">
    <text evidence="4">The propionyl coenzyme A carboxylase (PCC) complex is composed of three subunits: PccA (biotin carboxylase and biotin-carboxyl carrier), PccB (carboxyltransferase) and PccX.</text>
</comment>
<comment type="disruption phenotype">
    <text evidence="4">Cells lacking pccB and pccX genes accumulate a high level of propionyl-CoA, which would then inhibit CoA-dependent enzymes such as succinyl-CoA synthetase and could partially inhibit the TCA cycle. Also affected in growth and glucose utilization. Cells are unable to produce PHBV and show morphological abnormalitiess such as a decrease of PHBV granules.</text>
</comment>
<comment type="similarity">
    <text evidence="6">Belongs to the AccD/PCCB family.</text>
</comment>
<dbReference type="EC" id="6.4.1.3" evidence="4"/>
<dbReference type="EMBL" id="CP001868">
    <property type="protein sequence ID" value="AFK20161.1"/>
    <property type="molecule type" value="Genomic_DNA"/>
</dbReference>
<dbReference type="SMR" id="I3R7F1"/>
<dbReference type="STRING" id="523841.HFX_2478"/>
<dbReference type="PaxDb" id="523841-HFX_2478"/>
<dbReference type="KEGG" id="hme:HFX_2478"/>
<dbReference type="eggNOG" id="arCOG02705">
    <property type="taxonomic scope" value="Archaea"/>
</dbReference>
<dbReference type="HOGENOM" id="CLU_018822_6_2_2"/>
<dbReference type="BRENDA" id="6.4.1.3">
    <property type="organism ID" value="2566"/>
</dbReference>
<dbReference type="UniPathway" id="UPA00945">
    <property type="reaction ID" value="UER00908"/>
</dbReference>
<dbReference type="Proteomes" id="UP000006469">
    <property type="component" value="Chromosome"/>
</dbReference>
<dbReference type="GO" id="GO:0009317">
    <property type="term" value="C:acetyl-CoA carboxylase complex"/>
    <property type="evidence" value="ECO:0007669"/>
    <property type="project" value="TreeGrafter"/>
</dbReference>
<dbReference type="GO" id="GO:0016829">
    <property type="term" value="F:lyase activity"/>
    <property type="evidence" value="ECO:0007669"/>
    <property type="project" value="UniProtKB-KW"/>
</dbReference>
<dbReference type="GO" id="GO:0004658">
    <property type="term" value="F:propionyl-CoA carboxylase activity"/>
    <property type="evidence" value="ECO:0000314"/>
    <property type="project" value="UniProtKB"/>
</dbReference>
<dbReference type="FunFam" id="3.90.226.10:FF:000017">
    <property type="entry name" value="Propionyl-CoA carboxylase subunit beta 5"/>
    <property type="match status" value="1"/>
</dbReference>
<dbReference type="FunFam" id="3.90.226.10:FF:000016">
    <property type="entry name" value="Propionyl-CoA carboxylase, beta subunit"/>
    <property type="match status" value="1"/>
</dbReference>
<dbReference type="Gene3D" id="3.90.226.10">
    <property type="entry name" value="2-enoyl-CoA Hydratase, Chain A, domain 1"/>
    <property type="match status" value="2"/>
</dbReference>
<dbReference type="InterPro" id="IPR051047">
    <property type="entry name" value="AccD/PCCB"/>
</dbReference>
<dbReference type="InterPro" id="IPR034733">
    <property type="entry name" value="AcCoA_carboxyl_beta"/>
</dbReference>
<dbReference type="InterPro" id="IPR029045">
    <property type="entry name" value="ClpP/crotonase-like_dom_sf"/>
</dbReference>
<dbReference type="InterPro" id="IPR011763">
    <property type="entry name" value="COA_CT_C"/>
</dbReference>
<dbReference type="InterPro" id="IPR011762">
    <property type="entry name" value="COA_CT_N"/>
</dbReference>
<dbReference type="PANTHER" id="PTHR43842">
    <property type="entry name" value="PROPIONYL-COA CARBOXYLASE BETA CHAIN"/>
    <property type="match status" value="1"/>
</dbReference>
<dbReference type="PANTHER" id="PTHR43842:SF2">
    <property type="entry name" value="PROPIONYL-COA CARBOXYLASE BETA CHAIN, MITOCHONDRIAL"/>
    <property type="match status" value="1"/>
</dbReference>
<dbReference type="Pfam" id="PF01039">
    <property type="entry name" value="Carboxyl_trans"/>
    <property type="match status" value="1"/>
</dbReference>
<dbReference type="SUPFAM" id="SSF52096">
    <property type="entry name" value="ClpP/crotonase"/>
    <property type="match status" value="2"/>
</dbReference>
<dbReference type="PROSITE" id="PS50989">
    <property type="entry name" value="COA_CT_CTER"/>
    <property type="match status" value="1"/>
</dbReference>
<dbReference type="PROSITE" id="PS50980">
    <property type="entry name" value="COA_CT_NTER"/>
    <property type="match status" value="1"/>
</dbReference>
<gene>
    <name evidence="5" type="primary">pccB</name>
    <name type="synonym">accA</name>
    <name evidence="8" type="ordered locus">HFX_2478</name>
</gene>
<protein>
    <recommendedName>
        <fullName evidence="5">Propionyl-CoA carboxylase, carboxyltransferase subunit</fullName>
        <shortName evidence="5">PCC</shortName>
        <ecNumber evidence="4">6.4.1.3</ecNumber>
    </recommendedName>
</protein>
<sequence>MTMEDRIDELREKREEALKGGGEDRIASQHDKGKMTARERIDYFLDDGTFREFDQFRTHRNHKFGMEETKLPGDGVITGHGEVDGRTVFVFAHDFTVFGGSLGEVFAEKICKVMDKAMEVGAPVIGLNDSAGARIQEGVQSLGGFGEIFRRNTEASGVVPQISAIMGPCAGGAVYSPALTDFTFMVRDTSHMFITGPDVIKTVTGEEVTFDELGGATTHTSTSGVAHFATDTEEQALDDIRHLLSYLPQNNVEDPPRVEPWDDPERVADELEEIVPDQPRKPYDIHDVLNGVLDEGSFFGVQEDFAKNIVVGFGRLDGHSVGIVANQPRVNAGTLDIEASEKGARFIRFCDSFNIPILSFVDVPGFLPGTDQEHNGIIRHGAKLLYAYSEATVPLMTVITRKAYGGAYDVMASKHLGADVNYAWPTAEIAVMGPQGAVNILYRDELEAADDPDARRDELIEEYREEFANPYTAADRGFVDDVIEPGDTRNRLIADLRMLKSKRKSQPDKKHGNIPL</sequence>
<name>PCCB_HALMT</name>
<proteinExistence type="evidence at protein level"/>
<reference key="1">
    <citation type="journal article" date="2012" name="J. Bacteriol.">
        <title>Complete genome sequence of the metabolically versatile halophilic archaeon Haloferax mediterranei, a poly(3-hydroxybutyrate-co-3-hydroxyvalerate) producer.</title>
        <authorList>
            <person name="Han J."/>
            <person name="Zhang F."/>
            <person name="Hou J."/>
            <person name="Liu X."/>
            <person name="Li M."/>
            <person name="Liu H."/>
            <person name="Cai L."/>
            <person name="Zhang B."/>
            <person name="Chen Y."/>
            <person name="Zhou J."/>
            <person name="Hu S."/>
            <person name="Xiang H."/>
        </authorList>
    </citation>
    <scope>NUCLEOTIDE SEQUENCE [LARGE SCALE GENOMIC DNA]</scope>
    <source>
        <strain evidence="9">ATCC 33500 / DSM 1411 / JCM 8866 / NBRC 14739 / NCIMB 2177 / R-4</strain>
    </source>
</reference>
<reference key="2">
    <citation type="journal article" date="2015" name="Appl. Environ. Microbiol.">
        <title>Propionyl coenzyme A (propionyl-CoA) carboxylase in Haloferax mediterranei: Indispensability for propionyl-CoA assimilation and impacts on global metabolism.</title>
        <authorList>
            <person name="Hou J."/>
            <person name="Xiang H."/>
            <person name="Han J."/>
        </authorList>
    </citation>
    <scope>FUNCTION</scope>
    <scope>CATALYTIC ACTIVITY</scope>
    <scope>DISRUPTION PHENOTYPE</scope>
    <scope>SUBSTRATE SPECIFICITY</scope>
    <scope>PATHWAY</scope>
    <scope>SUBUNIT</scope>
    <source>
        <strain>ATCC 33500 / DSM 1411 / JCM 8866 / NBRC 14739 / NCIMB 2177 / R-4</strain>
    </source>
</reference>
<evidence type="ECO:0000255" key="1">
    <source>
        <dbReference type="PROSITE-ProRule" id="PRU01136"/>
    </source>
</evidence>
<evidence type="ECO:0000255" key="2">
    <source>
        <dbReference type="PROSITE-ProRule" id="PRU01137"/>
    </source>
</evidence>
<evidence type="ECO:0000256" key="3">
    <source>
        <dbReference type="SAM" id="MobiDB-lite"/>
    </source>
</evidence>
<evidence type="ECO:0000269" key="4">
    <source>
    </source>
</evidence>
<evidence type="ECO:0000303" key="5">
    <source>
    </source>
</evidence>
<evidence type="ECO:0000305" key="6"/>
<evidence type="ECO:0000305" key="7">
    <source>
    </source>
</evidence>
<evidence type="ECO:0000312" key="8">
    <source>
        <dbReference type="EMBL" id="AFK20161.1"/>
    </source>
</evidence>
<evidence type="ECO:0000312" key="9">
    <source>
        <dbReference type="Proteomes" id="UP000006469"/>
    </source>
</evidence>